<name>TRAF5_ECOLX</name>
<protein>
    <recommendedName>
        <fullName>Plasmid transfer protein TraF</fullName>
    </recommendedName>
</protein>
<organism>
    <name type="scientific">Escherichia coli</name>
    <dbReference type="NCBI Taxonomy" id="562"/>
    <lineage>
        <taxon>Bacteria</taxon>
        <taxon>Pseudomonadati</taxon>
        <taxon>Pseudomonadota</taxon>
        <taxon>Gammaproteobacteria</taxon>
        <taxon>Enterobacterales</taxon>
        <taxon>Enterobacteriaceae</taxon>
        <taxon>Escherichia</taxon>
    </lineage>
</organism>
<accession>Q05119</accession>
<comment type="function">
    <text evidence="1">Required for donor-specific phage sensitivity. May be involved in pilus assembly (By similarity).</text>
</comment>
<comment type="subcellular location">
    <subcellularLocation>
        <location evidence="3">Periplasm</location>
    </subcellularLocation>
</comment>
<comment type="similarity">
    <text evidence="3">Belongs to the peptidase S26C family.</text>
</comment>
<feature type="signal peptide" evidence="2">
    <location>
        <begin position="1"/>
        <end position="30"/>
    </location>
</feature>
<feature type="chain" id="PRO_0000024516" description="Plasmid transfer protein TraF">
    <location>
        <begin position="31"/>
        <end position="178"/>
    </location>
</feature>
<evidence type="ECO:0000250" key="1"/>
<evidence type="ECO:0000255" key="2"/>
<evidence type="ECO:0000305" key="3"/>
<reference key="1">
    <citation type="journal article" date="1992" name="J. Bacteriol.">
        <title>Mutational analysis of essential IncP alpha plasmid transfer genes traF and traG and involvement of traF in phage sensitivity.</title>
        <authorList>
            <person name="Waters V.L."/>
            <person name="Strack B."/>
            <person name="Pansegrau W."/>
            <person name="Lanka E."/>
            <person name="Guiney D.G."/>
        </authorList>
    </citation>
    <scope>NUCLEOTIDE SEQUENCE [GENOMIC DNA]</scope>
</reference>
<reference key="2">
    <citation type="submission" date="1996-08" db="EMBL/GenBank/DDBJ databases">
        <authorList>
            <person name="Thomas C.M."/>
        </authorList>
    </citation>
    <scope>NUCLEOTIDE SEQUENCE [GENOMIC DNA]</scope>
</reference>
<reference key="3">
    <citation type="journal article" date="1991" name="DNA Seq.">
        <title>Nucleotide sequence and organization of genes flanking the transfer origin of promiscuous plasmid RP4.</title>
        <authorList>
            <person name="Ziegelin G."/>
            <person name="Pansegrau W."/>
            <person name="Strack B."/>
            <person name="Balzer D."/>
            <person name="Kroeger M."/>
            <person name="Kruft V."/>
            <person name="Lanka E."/>
        </authorList>
    </citation>
    <scope>NUCLEOTIDE SEQUENCE [GENOMIC DNA] OF 1-8</scope>
    <source>
        <strain>ATCC 33694 / HB101</strain>
    </source>
</reference>
<proteinExistence type="inferred from homology"/>
<gene>
    <name type="primary">traF</name>
</gene>
<dbReference type="EMBL" id="M94367">
    <property type="protein sequence ID" value="AAA98318.1"/>
    <property type="molecule type" value="Genomic_DNA"/>
</dbReference>
<dbReference type="EMBL" id="U67194">
    <property type="protein sequence ID" value="AAC64473.1"/>
    <property type="molecule type" value="Genomic_DNA"/>
</dbReference>
<dbReference type="EMBL" id="X54458">
    <property type="protein sequence ID" value="CAA38326.1"/>
    <property type="molecule type" value="Genomic_DNA"/>
</dbReference>
<dbReference type="RefSeq" id="WP_006122512.1">
    <property type="nucleotide sequence ID" value="NZ_JBEEEK010000035.1"/>
</dbReference>
<dbReference type="MEROPS" id="S26.014"/>
<dbReference type="GeneID" id="93083048"/>
<dbReference type="GO" id="GO:0042597">
    <property type="term" value="C:periplasmic space"/>
    <property type="evidence" value="ECO:0007669"/>
    <property type="project" value="UniProtKB-SubCell"/>
</dbReference>
<dbReference type="GO" id="GO:0004252">
    <property type="term" value="F:serine-type endopeptidase activity"/>
    <property type="evidence" value="ECO:0007669"/>
    <property type="project" value="InterPro"/>
</dbReference>
<dbReference type="GO" id="GO:0006465">
    <property type="term" value="P:signal peptide processing"/>
    <property type="evidence" value="ECO:0007669"/>
    <property type="project" value="InterPro"/>
</dbReference>
<dbReference type="Gene3D" id="2.10.109.10">
    <property type="entry name" value="Umud Fragment, subunit A"/>
    <property type="match status" value="1"/>
</dbReference>
<dbReference type="InterPro" id="IPR036286">
    <property type="entry name" value="LexA/Signal_pep-like_sf"/>
</dbReference>
<dbReference type="InterPro" id="IPR019533">
    <property type="entry name" value="Peptidase_S26"/>
</dbReference>
<dbReference type="InterPro" id="IPR014139">
    <property type="entry name" value="Peptidase_S26C_TraF"/>
</dbReference>
<dbReference type="NCBIfam" id="NF010459">
    <property type="entry name" value="PRK13884.1"/>
    <property type="match status" value="1"/>
</dbReference>
<dbReference type="NCBIfam" id="TIGR02771">
    <property type="entry name" value="TraF_Ti"/>
    <property type="match status" value="1"/>
</dbReference>
<dbReference type="Pfam" id="PF10502">
    <property type="entry name" value="Peptidase_S26"/>
    <property type="match status" value="1"/>
</dbReference>
<dbReference type="SUPFAM" id="SSF51306">
    <property type="entry name" value="LexA/Signal peptidase"/>
    <property type="match status" value="1"/>
</dbReference>
<keyword id="KW-0184">Conjugation</keyword>
<keyword id="KW-0574">Periplasm</keyword>
<keyword id="KW-0614">Plasmid</keyword>
<keyword id="KW-0732">Signal</keyword>
<geneLocation type="plasmid">
    <name>IncP-beta R751</name>
</geneLocation>
<sequence length="178" mass="18847">MSRILKRIAAGVVIAGVAALLLAAGGYAAGARVNTTKSIPVGLYWTSSAPVEKGAYVLFCPPQLGVFDDAKERGYIGAGFCQGGYGYMMKRVLAAKDDAVAVADDGVRVNGELLPLSAPIKADKAGRPLPRYQSNSYTLGNSEVLLMSDVSATSFDGRYFGPINRSQIKTVIRPVITW</sequence>